<feature type="signal peptide" evidence="2">
    <location>
        <begin position="1"/>
        <end position="27"/>
    </location>
</feature>
<feature type="chain" id="PRO_5004246496" description="Serine/threonine-protein kinase/endoribonuclease ireA">
    <location>
        <begin position="28"/>
        <end position="1165"/>
    </location>
</feature>
<feature type="topological domain" description="Lumenal" evidence="10">
    <location>
        <begin position="28"/>
        <end position="504"/>
    </location>
</feature>
<feature type="transmembrane region" description="Helical" evidence="2">
    <location>
        <begin position="505"/>
        <end position="525"/>
    </location>
</feature>
<feature type="topological domain" description="Cytoplasmic" evidence="10">
    <location>
        <begin position="526"/>
        <end position="1165"/>
    </location>
</feature>
<feature type="domain" description="Protein kinase" evidence="3">
    <location>
        <begin position="711"/>
        <end position="1026"/>
    </location>
</feature>
<feature type="domain" description="KEN" evidence="5">
    <location>
        <begin position="1029"/>
        <end position="1163"/>
    </location>
</feature>
<feature type="region of interest" description="Disordered" evidence="6">
    <location>
        <begin position="547"/>
        <end position="668"/>
    </location>
</feature>
<feature type="region of interest" description="Disordered" evidence="6">
    <location>
        <begin position="899"/>
        <end position="919"/>
    </location>
</feature>
<feature type="compositionally biased region" description="Basic and acidic residues" evidence="6">
    <location>
        <begin position="591"/>
        <end position="600"/>
    </location>
</feature>
<feature type="compositionally biased region" description="Basic and acidic residues" evidence="6">
    <location>
        <begin position="611"/>
        <end position="620"/>
    </location>
</feature>
<feature type="compositionally biased region" description="Basic residues" evidence="6">
    <location>
        <begin position="637"/>
        <end position="655"/>
    </location>
</feature>
<feature type="compositionally biased region" description="Basic and acidic residues" evidence="6">
    <location>
        <begin position="656"/>
        <end position="668"/>
    </location>
</feature>
<feature type="active site" description="Proton acceptor" evidence="3">
    <location>
        <position position="832"/>
    </location>
</feature>
<feature type="binding site" evidence="3">
    <location>
        <begin position="717"/>
        <end position="725"/>
    </location>
    <ligand>
        <name>ATP</name>
        <dbReference type="ChEBI" id="CHEBI:30616"/>
    </ligand>
</feature>
<feature type="binding site" evidence="3">
    <location>
        <position position="739"/>
    </location>
    <ligand>
        <name>ATP</name>
        <dbReference type="ChEBI" id="CHEBI:30616"/>
    </ligand>
</feature>
<feature type="glycosylation site" description="N-linked (GlcNAc...) asparagine" evidence="4">
    <location>
        <position position="152"/>
    </location>
</feature>
<proteinExistence type="evidence at protein level"/>
<accession>Q4WKP8</accession>
<protein>
    <recommendedName>
        <fullName evidence="9">Serine/threonine-protein kinase/endoribonuclease ireA</fullName>
    </recommendedName>
    <alternativeName>
        <fullName evidence="1">Endoplasmic reticulum-to-nucleus signaling A</fullName>
    </alternativeName>
    <domain>
        <recommendedName>
            <fullName evidence="1">Serine/threonine-protein kinase</fullName>
            <ecNumber evidence="1">2.7.11.1</ecNumber>
        </recommendedName>
    </domain>
    <domain>
        <recommendedName>
            <fullName evidence="1">Endoribonuclease</fullName>
            <ecNumber evidence="1">3.1.26.-</ecNumber>
        </recommendedName>
    </domain>
</protein>
<organism>
    <name type="scientific">Aspergillus fumigatus (strain ATCC MYA-4609 / CBS 101355 / FGSC A1100 / Af293)</name>
    <name type="common">Neosartorya fumigata</name>
    <dbReference type="NCBI Taxonomy" id="330879"/>
    <lineage>
        <taxon>Eukaryota</taxon>
        <taxon>Fungi</taxon>
        <taxon>Dikarya</taxon>
        <taxon>Ascomycota</taxon>
        <taxon>Pezizomycotina</taxon>
        <taxon>Eurotiomycetes</taxon>
        <taxon>Eurotiomycetidae</taxon>
        <taxon>Eurotiales</taxon>
        <taxon>Aspergillaceae</taxon>
        <taxon>Aspergillus</taxon>
        <taxon>Aspergillus subgen. Fumigati</taxon>
    </lineage>
</organism>
<evidence type="ECO:0000250" key="1">
    <source>
        <dbReference type="UniProtKB" id="P32361"/>
    </source>
</evidence>
<evidence type="ECO:0000255" key="2"/>
<evidence type="ECO:0000255" key="3">
    <source>
        <dbReference type="PROSITE-ProRule" id="PRU00159"/>
    </source>
</evidence>
<evidence type="ECO:0000255" key="4">
    <source>
        <dbReference type="PROSITE-ProRule" id="PRU00498"/>
    </source>
</evidence>
<evidence type="ECO:0000255" key="5">
    <source>
        <dbReference type="PROSITE-ProRule" id="PRU00725"/>
    </source>
</evidence>
<evidence type="ECO:0000256" key="6">
    <source>
        <dbReference type="SAM" id="MobiDB-lite"/>
    </source>
</evidence>
<evidence type="ECO:0000269" key="7">
    <source>
    </source>
</evidence>
<evidence type="ECO:0000269" key="8">
    <source>
    </source>
</evidence>
<evidence type="ECO:0000303" key="9">
    <source>
    </source>
</evidence>
<evidence type="ECO:0000305" key="10"/>
<keyword id="KW-0067">ATP-binding</keyword>
<keyword id="KW-0325">Glycoprotein</keyword>
<keyword id="KW-0378">Hydrolase</keyword>
<keyword id="KW-0418">Kinase</keyword>
<keyword id="KW-0460">Magnesium</keyword>
<keyword id="KW-0472">Membrane</keyword>
<keyword id="KW-0479">Metal-binding</keyword>
<keyword id="KW-0511">Multifunctional enzyme</keyword>
<keyword id="KW-0547">Nucleotide-binding</keyword>
<keyword id="KW-1185">Reference proteome</keyword>
<keyword id="KW-0723">Serine/threonine-protein kinase</keyword>
<keyword id="KW-0732">Signal</keyword>
<keyword id="KW-0808">Transferase</keyword>
<keyword id="KW-0812">Transmembrane</keyword>
<keyword id="KW-1133">Transmembrane helix</keyword>
<keyword id="KW-0834">Unfolded protein response</keyword>
<keyword id="KW-0843">Virulence</keyword>
<comment type="function">
    <text evidence="1 7 8">Senses unfolded proteins in the lumen of the endoplasmic reticulum (ER) via its N-terminal domain which leads to enzyme auto-activation (By similarity). The active endoribonuclease domain responds by cleaving an intron from the downstream cytoplasmic mRNA hacA, allowing for the translation of a transcription factor that coordinates a series of adaptive responses that are collectively known as the unfolded protein response (UPR) (PubMed:33087521). In the absence of ER stress, ireA controls dual signaling circuits that are both hacA-dependent and hacA-independent and which contribute to the expression of traits that are essential for virulence (PubMed:22028661).</text>
</comment>
<comment type="catalytic activity">
    <reaction evidence="1">
        <text>L-seryl-[protein] + ATP = O-phospho-L-seryl-[protein] + ADP + H(+)</text>
        <dbReference type="Rhea" id="RHEA:17989"/>
        <dbReference type="Rhea" id="RHEA-COMP:9863"/>
        <dbReference type="Rhea" id="RHEA-COMP:11604"/>
        <dbReference type="ChEBI" id="CHEBI:15378"/>
        <dbReference type="ChEBI" id="CHEBI:29999"/>
        <dbReference type="ChEBI" id="CHEBI:30616"/>
        <dbReference type="ChEBI" id="CHEBI:83421"/>
        <dbReference type="ChEBI" id="CHEBI:456216"/>
        <dbReference type="EC" id="2.7.11.1"/>
    </reaction>
    <physiologicalReaction direction="left-to-right" evidence="1">
        <dbReference type="Rhea" id="RHEA:17990"/>
    </physiologicalReaction>
</comment>
<comment type="catalytic activity">
    <reaction evidence="1">
        <text>L-threonyl-[protein] + ATP = O-phospho-L-threonyl-[protein] + ADP + H(+)</text>
        <dbReference type="Rhea" id="RHEA:46608"/>
        <dbReference type="Rhea" id="RHEA-COMP:11060"/>
        <dbReference type="Rhea" id="RHEA-COMP:11605"/>
        <dbReference type="ChEBI" id="CHEBI:15378"/>
        <dbReference type="ChEBI" id="CHEBI:30013"/>
        <dbReference type="ChEBI" id="CHEBI:30616"/>
        <dbReference type="ChEBI" id="CHEBI:61977"/>
        <dbReference type="ChEBI" id="CHEBI:456216"/>
        <dbReference type="EC" id="2.7.11.1"/>
    </reaction>
    <physiologicalReaction direction="left-to-right" evidence="1">
        <dbReference type="Rhea" id="RHEA:46609"/>
    </physiologicalReaction>
</comment>
<comment type="cofactor">
    <cofactor evidence="1">
        <name>Mg(2+)</name>
        <dbReference type="ChEBI" id="CHEBI:18420"/>
    </cofactor>
</comment>
<comment type="activity regulation">
    <text evidence="1 8">8-formyl-7-hydroxy-4-methylcoumarin inhibits the endonuclease activity and prebvent the splicing if the hacA mRNA (PubMed:33087521). The kinase domain is activated by trans-autophosphorylation (By similarity). Kinase activity is required for activation of the endoribonuclease domain (By similarity).</text>
</comment>
<comment type="subunit">
    <text evidence="1">Homodimer; in response to the accumulation of unfolded proteins.</text>
</comment>
<comment type="subcellular location">
    <subcellularLocation>
        <location evidence="2">Membrane</location>
        <topology evidence="2">Single-pass type I membrane protein</topology>
    </subcellularLocation>
</comment>
<comment type="PTM">
    <text evidence="1">Autophosphorylated mainly on serine residues.</text>
</comment>
<comment type="disruption phenotype">
    <text evidence="7">Leads to avirulence in a mouse model of invasive aspergillosis (PubMed:22028661). Results in severe defects in the expression of multiple virulence-related traits, including reduced thermotolerance, decreased nutritional versatility, impaired growth under hypoxia, altered cell wall and membrane composition, and increased susceptibility to azole antifungals (PubMed:22028661).</text>
</comment>
<comment type="similarity">
    <text evidence="3">Belongs to the protein kinase superfamily. Ser/Thr protein kinase family.</text>
</comment>
<reference key="1">
    <citation type="journal article" date="2005" name="Nature">
        <title>Genomic sequence of the pathogenic and allergenic filamentous fungus Aspergillus fumigatus.</title>
        <authorList>
            <person name="Nierman W.C."/>
            <person name="Pain A."/>
            <person name="Anderson M.J."/>
            <person name="Wortman J.R."/>
            <person name="Kim H.S."/>
            <person name="Arroyo J."/>
            <person name="Berriman M."/>
            <person name="Abe K."/>
            <person name="Archer D.B."/>
            <person name="Bermejo C."/>
            <person name="Bennett J.W."/>
            <person name="Bowyer P."/>
            <person name="Chen D."/>
            <person name="Collins M."/>
            <person name="Coulsen R."/>
            <person name="Davies R."/>
            <person name="Dyer P.S."/>
            <person name="Farman M.L."/>
            <person name="Fedorova N."/>
            <person name="Fedorova N.D."/>
            <person name="Feldblyum T.V."/>
            <person name="Fischer R."/>
            <person name="Fosker N."/>
            <person name="Fraser A."/>
            <person name="Garcia J.L."/>
            <person name="Garcia M.J."/>
            <person name="Goble A."/>
            <person name="Goldman G.H."/>
            <person name="Gomi K."/>
            <person name="Griffith-Jones S."/>
            <person name="Gwilliam R."/>
            <person name="Haas B.J."/>
            <person name="Haas H."/>
            <person name="Harris D.E."/>
            <person name="Horiuchi H."/>
            <person name="Huang J."/>
            <person name="Humphray S."/>
            <person name="Jimenez J."/>
            <person name="Keller N."/>
            <person name="Khouri H."/>
            <person name="Kitamoto K."/>
            <person name="Kobayashi T."/>
            <person name="Konzack S."/>
            <person name="Kulkarni R."/>
            <person name="Kumagai T."/>
            <person name="Lafton A."/>
            <person name="Latge J.-P."/>
            <person name="Li W."/>
            <person name="Lord A."/>
            <person name="Lu C."/>
            <person name="Majoros W.H."/>
            <person name="May G.S."/>
            <person name="Miller B.L."/>
            <person name="Mohamoud Y."/>
            <person name="Molina M."/>
            <person name="Monod M."/>
            <person name="Mouyna I."/>
            <person name="Mulligan S."/>
            <person name="Murphy L.D."/>
            <person name="O'Neil S."/>
            <person name="Paulsen I."/>
            <person name="Penalva M.A."/>
            <person name="Pertea M."/>
            <person name="Price C."/>
            <person name="Pritchard B.L."/>
            <person name="Quail M.A."/>
            <person name="Rabbinowitsch E."/>
            <person name="Rawlins N."/>
            <person name="Rajandream M.A."/>
            <person name="Reichard U."/>
            <person name="Renauld H."/>
            <person name="Robson G.D."/>
            <person name="Rodriguez de Cordoba S."/>
            <person name="Rodriguez-Pena J.M."/>
            <person name="Ronning C.M."/>
            <person name="Rutter S."/>
            <person name="Salzberg S.L."/>
            <person name="Sanchez M."/>
            <person name="Sanchez-Ferrero J.C."/>
            <person name="Saunders D."/>
            <person name="Seeger K."/>
            <person name="Squares R."/>
            <person name="Squares S."/>
            <person name="Takeuchi M."/>
            <person name="Tekaia F."/>
            <person name="Turner G."/>
            <person name="Vazquez de Aldana C.R."/>
            <person name="Weidman J."/>
            <person name="White O."/>
            <person name="Woodward J.R."/>
            <person name="Yu J.-H."/>
            <person name="Fraser C.M."/>
            <person name="Galagan J.E."/>
            <person name="Asai K."/>
            <person name="Machida M."/>
            <person name="Hall N."/>
            <person name="Barrell B.G."/>
            <person name="Denning D.W."/>
        </authorList>
    </citation>
    <scope>NUCLEOTIDE SEQUENCE [LARGE SCALE GENOMIC DNA]</scope>
    <source>
        <strain>ATCC MYA-4609 / CBS 101355 / FGSC A1100 / Af293</strain>
    </source>
</reference>
<reference key="2">
    <citation type="journal article" date="2011" name="PLoS Pathog.">
        <title>HacA-independent functions of the ER stress sensor IreA synergize with the canonical UPR to influence virulence traits in Aspergillus fumigatus.</title>
        <authorList>
            <person name="Feng X."/>
            <person name="Krishnan K."/>
            <person name="Richie D.L."/>
            <person name="Aimanianda V."/>
            <person name="Hartl L."/>
            <person name="Grahl N."/>
            <person name="Powers-Fletcher M.V."/>
            <person name="Zhang M."/>
            <person name="Fuller K.K."/>
            <person name="Nierman W.C."/>
            <person name="Lu L.J."/>
            <person name="Latge J.P."/>
            <person name="Woollett L."/>
            <person name="Newman S.L."/>
            <person name="Cramer R.A. Jr."/>
            <person name="Rhodes J.C."/>
            <person name="Askew D.S."/>
        </authorList>
    </citation>
    <scope>FUNCTION</scope>
    <scope>DISRUPTION PHENOTYPE</scope>
</reference>
<reference key="3">
    <citation type="journal article" date="2020" name="MSphere">
        <title>A human IRE1 inhibitor blocks the unfolded protein response in the pathogenic fungus Aspergillus fumigatus and suggests noncanonical functions within the pathway.</title>
        <authorList>
            <person name="Guirao-Abad J.P."/>
            <person name="Weichert M."/>
            <person name="Albee A."/>
            <person name="Deck K."/>
            <person name="Askew D.S."/>
        </authorList>
    </citation>
    <scope>FUNCTION</scope>
    <scope>CATALYTIC ACTIVITY</scope>
    <scope>ACTIVITY REGULATION</scope>
</reference>
<name>IREA_ASPFU</name>
<dbReference type="EC" id="2.7.11.1" evidence="1"/>
<dbReference type="EC" id="3.1.26.-" evidence="1"/>
<dbReference type="EMBL" id="AAHF01000007">
    <property type="protein sequence ID" value="EAL87884.1"/>
    <property type="molecule type" value="Genomic_DNA"/>
</dbReference>
<dbReference type="RefSeq" id="XP_749922.1">
    <property type="nucleotide sequence ID" value="XM_744829.1"/>
</dbReference>
<dbReference type="SMR" id="Q4WKP8"/>
<dbReference type="FunCoup" id="Q4WKP8">
    <property type="interactions" value="134"/>
</dbReference>
<dbReference type="STRING" id="330879.Q4WKP8"/>
<dbReference type="EnsemblFungi" id="EAL87884">
    <property type="protein sequence ID" value="EAL87884"/>
    <property type="gene ID" value="AFUA_1G01720"/>
</dbReference>
<dbReference type="GeneID" id="3507278"/>
<dbReference type="KEGG" id="afm:AFUA_1G01720"/>
<dbReference type="VEuPathDB" id="FungiDB:Afu1g01720"/>
<dbReference type="eggNOG" id="KOG1027">
    <property type="taxonomic scope" value="Eukaryota"/>
</dbReference>
<dbReference type="HOGENOM" id="CLU_004875_2_0_1"/>
<dbReference type="InParanoid" id="Q4WKP8"/>
<dbReference type="OMA" id="QCYEKDY"/>
<dbReference type="OrthoDB" id="63989at2759"/>
<dbReference type="Proteomes" id="UP000002530">
    <property type="component" value="Chromosome 1"/>
</dbReference>
<dbReference type="GO" id="GO:1990604">
    <property type="term" value="C:IRE1-TRAF2-ASK1 complex"/>
    <property type="evidence" value="ECO:0000318"/>
    <property type="project" value="GO_Central"/>
</dbReference>
<dbReference type="GO" id="GO:0005524">
    <property type="term" value="F:ATP binding"/>
    <property type="evidence" value="ECO:0007669"/>
    <property type="project" value="UniProtKB-KW"/>
</dbReference>
<dbReference type="GO" id="GO:0046872">
    <property type="term" value="F:metal ion binding"/>
    <property type="evidence" value="ECO:0007669"/>
    <property type="project" value="UniProtKB-KW"/>
</dbReference>
<dbReference type="GO" id="GO:0106310">
    <property type="term" value="F:protein serine kinase activity"/>
    <property type="evidence" value="ECO:0007669"/>
    <property type="project" value="RHEA"/>
</dbReference>
<dbReference type="GO" id="GO:0004674">
    <property type="term" value="F:protein serine/threonine kinase activity"/>
    <property type="evidence" value="ECO:0000318"/>
    <property type="project" value="GO_Central"/>
</dbReference>
<dbReference type="GO" id="GO:0004521">
    <property type="term" value="F:RNA endonuclease activity"/>
    <property type="evidence" value="ECO:0000315"/>
    <property type="project" value="AspGD"/>
</dbReference>
<dbReference type="GO" id="GO:0051082">
    <property type="term" value="F:unfolded protein binding"/>
    <property type="evidence" value="ECO:0000318"/>
    <property type="project" value="GO_Central"/>
</dbReference>
<dbReference type="GO" id="GO:0030968">
    <property type="term" value="P:endoplasmic reticulum unfolded protein response"/>
    <property type="evidence" value="ECO:0000315"/>
    <property type="project" value="AspGD"/>
</dbReference>
<dbReference type="GO" id="GO:0031505">
    <property type="term" value="P:fungal-type cell wall organization"/>
    <property type="evidence" value="ECO:0000315"/>
    <property type="project" value="AspGD"/>
</dbReference>
<dbReference type="GO" id="GO:0070059">
    <property type="term" value="P:intrinsic apoptotic signaling pathway in response to endoplasmic reticulum stress"/>
    <property type="evidence" value="ECO:0000318"/>
    <property type="project" value="GO_Central"/>
</dbReference>
<dbReference type="GO" id="GO:0036498">
    <property type="term" value="P:IRE1-mediated unfolded protein response"/>
    <property type="evidence" value="ECO:0000318"/>
    <property type="project" value="GO_Central"/>
</dbReference>
<dbReference type="GO" id="GO:0006397">
    <property type="term" value="P:mRNA processing"/>
    <property type="evidence" value="ECO:0007669"/>
    <property type="project" value="InterPro"/>
</dbReference>
<dbReference type="CDD" id="cd09769">
    <property type="entry name" value="Luminal_IRE1"/>
    <property type="match status" value="1"/>
</dbReference>
<dbReference type="CDD" id="cd10422">
    <property type="entry name" value="RNase_Ire1"/>
    <property type="match status" value="1"/>
</dbReference>
<dbReference type="CDD" id="cd13982">
    <property type="entry name" value="STKc_IRE1"/>
    <property type="match status" value="1"/>
</dbReference>
<dbReference type="FunFam" id="1.10.510.10:FF:000572">
    <property type="entry name" value="Serine/threonine-protein kinase/endoribonuclease IRE1"/>
    <property type="match status" value="1"/>
</dbReference>
<dbReference type="FunFam" id="1.20.1440.180:FF:000002">
    <property type="entry name" value="Serine/threonine-protein kinase/endoribonuclease IRE1"/>
    <property type="match status" value="1"/>
</dbReference>
<dbReference type="FunFam" id="3.30.200.20:FF:000443">
    <property type="entry name" value="Serine/threonine-protein kinase/endoribonuclease IRE1"/>
    <property type="match status" value="1"/>
</dbReference>
<dbReference type="Gene3D" id="1.20.1440.180">
    <property type="entry name" value="KEN domain"/>
    <property type="match status" value="1"/>
</dbReference>
<dbReference type="Gene3D" id="3.30.200.20">
    <property type="entry name" value="Phosphorylase Kinase, domain 1"/>
    <property type="match status" value="1"/>
</dbReference>
<dbReference type="Gene3D" id="1.10.510.10">
    <property type="entry name" value="Transferase(Phosphotransferase) domain 1"/>
    <property type="match status" value="1"/>
</dbReference>
<dbReference type="Gene3D" id="2.130.10.10">
    <property type="entry name" value="YVTN repeat-like/Quinoprotein amine dehydrogenase"/>
    <property type="match status" value="1"/>
</dbReference>
<dbReference type="InterPro" id="IPR045133">
    <property type="entry name" value="IRE1/2-like"/>
</dbReference>
<dbReference type="InterPro" id="IPR010513">
    <property type="entry name" value="KEN_dom"/>
</dbReference>
<dbReference type="InterPro" id="IPR038357">
    <property type="entry name" value="KEN_sf"/>
</dbReference>
<dbReference type="InterPro" id="IPR011009">
    <property type="entry name" value="Kinase-like_dom_sf"/>
</dbReference>
<dbReference type="InterPro" id="IPR018391">
    <property type="entry name" value="PQQ_b-propeller_rpt"/>
</dbReference>
<dbReference type="InterPro" id="IPR000719">
    <property type="entry name" value="Prot_kinase_dom"/>
</dbReference>
<dbReference type="InterPro" id="IPR011047">
    <property type="entry name" value="Quinoprotein_ADH-like_sf"/>
</dbReference>
<dbReference type="InterPro" id="IPR008271">
    <property type="entry name" value="Ser/Thr_kinase_AS"/>
</dbReference>
<dbReference type="InterPro" id="IPR015943">
    <property type="entry name" value="WD40/YVTN_repeat-like_dom_sf"/>
</dbReference>
<dbReference type="PANTHER" id="PTHR13954">
    <property type="entry name" value="IRE1-RELATED"/>
    <property type="match status" value="1"/>
</dbReference>
<dbReference type="PANTHER" id="PTHR13954:SF6">
    <property type="entry name" value="NON-SPECIFIC SERINE_THREONINE PROTEIN KINASE"/>
    <property type="match status" value="1"/>
</dbReference>
<dbReference type="Pfam" id="PF00069">
    <property type="entry name" value="Pkinase"/>
    <property type="match status" value="1"/>
</dbReference>
<dbReference type="Pfam" id="PF06479">
    <property type="entry name" value="Ribonuc_2-5A"/>
    <property type="match status" value="1"/>
</dbReference>
<dbReference type="SMART" id="SM00564">
    <property type="entry name" value="PQQ"/>
    <property type="match status" value="2"/>
</dbReference>
<dbReference type="SMART" id="SM00580">
    <property type="entry name" value="PUG"/>
    <property type="match status" value="1"/>
</dbReference>
<dbReference type="SMART" id="SM00220">
    <property type="entry name" value="S_TKc"/>
    <property type="match status" value="1"/>
</dbReference>
<dbReference type="SUPFAM" id="SSF56112">
    <property type="entry name" value="Protein kinase-like (PK-like)"/>
    <property type="match status" value="1"/>
</dbReference>
<dbReference type="SUPFAM" id="SSF50998">
    <property type="entry name" value="Quinoprotein alcohol dehydrogenase-like"/>
    <property type="match status" value="1"/>
</dbReference>
<dbReference type="PROSITE" id="PS51392">
    <property type="entry name" value="KEN"/>
    <property type="match status" value="1"/>
</dbReference>
<dbReference type="PROSITE" id="PS50011">
    <property type="entry name" value="PROTEIN_KINASE_DOM"/>
    <property type="match status" value="1"/>
</dbReference>
<dbReference type="PROSITE" id="PS00108">
    <property type="entry name" value="PROTEIN_KINASE_ST"/>
    <property type="match status" value="1"/>
</dbReference>
<sequence>MRWRLPGARTTLPASVALLLLPILVAPQQLQEHDDLPSTLSVPLSPTQRSFDHHPLPTINVKSNDASALATMALAGPGRAVRARPAQASSSSAGLAPQLHARSLQDWEVEDFVLLATVDGSIHARDRRTGAARWALEVPSSPMVESIYHRANRSSFDRAQPEDDFLWIVEPSQDGNLYIYSPGPDAGLQKLGLTVKELVEQTPYSGTDPAVTYTARKETTLYTVDARTGNILQVFSSRGPITSGHGCRKVDGFDLEAEECDTPSGTLVLGRVEYAVAIQNTETGDPICTLKYSEWTANNRDMDLQSQYFRTMDQSHIYSMHDGVVLGFDHSRMDRPRYTQRFSSPVVRVFDVARPINVESPEAATPLVLLSQPLQPPDPDYGSLDDRDARVFVDCTSAGGWFAMSEETYPLVTGRAKMAQCYEKDYLRHGQPLTSLPTSQQRDALAGVHSLNGPRVVRNTPSISGPSPLELANDTPRELMRSPSELALPPALRHSTIIRKGWDNAVDIFVTILLLFFGAFIYFNSHNIQELAKQKLDVKNIIASYAQPPLSTPSTPVVESTHFKRDSSPSRPISNLTVEVTVPEEQQEGDATPKPKRDRSAVGPDSTPRVKIREPSRGPDSDDDVEELDQAASPEKPKKKARRGRRGGKNHRRGKKPDSEGESKDQADRVVDQVNNLQPQSRLEPDLQLVRTVSNDIIEMDGVLQIGRLRVFSDVVLGHGSHGTVVYRGSFDGRDVAVKRMLVEFYDIASHEVGLLQESDDHNNVIRYFCREQAAGFLYIALELCPASLQDLIERPGDYPQLVQGGLDMPDILRQIIAGVRYLHSLKIVHRDLKPQNILVAMPRGRTGSRSLRLLISDFGLCKKLDDNQSSFRATTAHAAGTSGWRAPELLVDDDNRSAIQGGESQHTESSEPAVVDPQTNRRATRAIDIFSLGCVFYYVLTRGSHPFDKNGKFMREANIVKGNFNLDELQRLGDYAFEADDLIRSMLSLDPRKRLAPLCSSLAFRLFTDLFPRPDASAVLMHPFFWNPSDRLSFLCDVSDHFEFEPRDPPSDALLCLESVACRVMGPEMDFLRLLPKDFKDNLGKQRKYTGSKMLDLLRALRNKRNHYNDMPAHLKAHIGGLPEGYLNFWTVRFPSLLMSCHSVIVELRLTKIDRFKRYFTPVE</sequence>
<gene>
    <name evidence="9" type="primary">ireA</name>
    <name type="ORF">AFUA_1G01720</name>
</gene>